<name>TRMFO_LACLA</name>
<evidence type="ECO:0000255" key="1">
    <source>
        <dbReference type="HAMAP-Rule" id="MF_01037"/>
    </source>
</evidence>
<proteinExistence type="inferred from homology"/>
<comment type="function">
    <text evidence="1">Catalyzes the folate-dependent formation of 5-methyl-uridine at position 54 (M-5-U54) in all tRNAs.</text>
</comment>
<comment type="catalytic activity">
    <reaction evidence="1">
        <text>uridine(54) in tRNA + (6R)-5,10-methylene-5,6,7,8-tetrahydrofolate + NADH + H(+) = 5-methyluridine(54) in tRNA + (6S)-5,6,7,8-tetrahydrofolate + NAD(+)</text>
        <dbReference type="Rhea" id="RHEA:16873"/>
        <dbReference type="Rhea" id="RHEA-COMP:10167"/>
        <dbReference type="Rhea" id="RHEA-COMP:10193"/>
        <dbReference type="ChEBI" id="CHEBI:15378"/>
        <dbReference type="ChEBI" id="CHEBI:15636"/>
        <dbReference type="ChEBI" id="CHEBI:57453"/>
        <dbReference type="ChEBI" id="CHEBI:57540"/>
        <dbReference type="ChEBI" id="CHEBI:57945"/>
        <dbReference type="ChEBI" id="CHEBI:65315"/>
        <dbReference type="ChEBI" id="CHEBI:74447"/>
        <dbReference type="EC" id="2.1.1.74"/>
    </reaction>
</comment>
<comment type="catalytic activity">
    <reaction evidence="1">
        <text>uridine(54) in tRNA + (6R)-5,10-methylene-5,6,7,8-tetrahydrofolate + NADPH + H(+) = 5-methyluridine(54) in tRNA + (6S)-5,6,7,8-tetrahydrofolate + NADP(+)</text>
        <dbReference type="Rhea" id="RHEA:62372"/>
        <dbReference type="Rhea" id="RHEA-COMP:10167"/>
        <dbReference type="Rhea" id="RHEA-COMP:10193"/>
        <dbReference type="ChEBI" id="CHEBI:15378"/>
        <dbReference type="ChEBI" id="CHEBI:15636"/>
        <dbReference type="ChEBI" id="CHEBI:57453"/>
        <dbReference type="ChEBI" id="CHEBI:57783"/>
        <dbReference type="ChEBI" id="CHEBI:58349"/>
        <dbReference type="ChEBI" id="CHEBI:65315"/>
        <dbReference type="ChEBI" id="CHEBI:74447"/>
        <dbReference type="EC" id="2.1.1.74"/>
    </reaction>
</comment>
<comment type="cofactor">
    <cofactor evidence="1">
        <name>FAD</name>
        <dbReference type="ChEBI" id="CHEBI:57692"/>
    </cofactor>
</comment>
<comment type="subcellular location">
    <subcellularLocation>
        <location evidence="1">Cytoplasm</location>
    </subcellularLocation>
</comment>
<comment type="similarity">
    <text evidence="1">Belongs to the MnmG family. TrmFO subfamily.</text>
</comment>
<accession>Q9CG79</accession>
<reference key="1">
    <citation type="journal article" date="2001" name="Genome Res.">
        <title>The complete genome sequence of the lactic acid bacterium Lactococcus lactis ssp. lactis IL1403.</title>
        <authorList>
            <person name="Bolotin A."/>
            <person name="Wincker P."/>
            <person name="Mauger S."/>
            <person name="Jaillon O."/>
            <person name="Malarme K."/>
            <person name="Weissenbach J."/>
            <person name="Ehrlich S.D."/>
            <person name="Sorokin A."/>
        </authorList>
    </citation>
    <scope>NUCLEOTIDE SEQUENCE [LARGE SCALE GENOMIC DNA]</scope>
    <source>
        <strain>IL1403</strain>
    </source>
</reference>
<dbReference type="EC" id="2.1.1.74" evidence="1"/>
<dbReference type="EMBL" id="AE005176">
    <property type="protein sequence ID" value="AAK05329.1"/>
    <property type="molecule type" value="Genomic_DNA"/>
</dbReference>
<dbReference type="PIR" id="G86778">
    <property type="entry name" value="G86778"/>
</dbReference>
<dbReference type="RefSeq" id="NP_267387.1">
    <property type="nucleotide sequence ID" value="NC_002662.1"/>
</dbReference>
<dbReference type="RefSeq" id="WP_003131150.1">
    <property type="nucleotide sequence ID" value="NC_002662.1"/>
</dbReference>
<dbReference type="SMR" id="Q9CG79"/>
<dbReference type="PaxDb" id="272623-L56416"/>
<dbReference type="EnsemblBacteria" id="AAK05329">
    <property type="protein sequence ID" value="AAK05329"/>
    <property type="gene ID" value="L56416"/>
</dbReference>
<dbReference type="GeneID" id="89633400"/>
<dbReference type="KEGG" id="lla:L56416"/>
<dbReference type="PATRIC" id="fig|272623.7.peg.1333"/>
<dbReference type="eggNOG" id="COG1206">
    <property type="taxonomic scope" value="Bacteria"/>
</dbReference>
<dbReference type="HOGENOM" id="CLU_033057_1_0_9"/>
<dbReference type="OrthoDB" id="9803114at2"/>
<dbReference type="Proteomes" id="UP000002196">
    <property type="component" value="Chromosome"/>
</dbReference>
<dbReference type="GO" id="GO:0005829">
    <property type="term" value="C:cytosol"/>
    <property type="evidence" value="ECO:0007669"/>
    <property type="project" value="TreeGrafter"/>
</dbReference>
<dbReference type="GO" id="GO:0050660">
    <property type="term" value="F:flavin adenine dinucleotide binding"/>
    <property type="evidence" value="ECO:0007669"/>
    <property type="project" value="UniProtKB-UniRule"/>
</dbReference>
<dbReference type="GO" id="GO:0047151">
    <property type="term" value="F:tRNA (uracil(54)-C5)-methyltransferase activity, 5,10-methylenetetrahydrofolate-dependent"/>
    <property type="evidence" value="ECO:0007669"/>
    <property type="project" value="UniProtKB-UniRule"/>
</dbReference>
<dbReference type="GO" id="GO:0030488">
    <property type="term" value="P:tRNA methylation"/>
    <property type="evidence" value="ECO:0007669"/>
    <property type="project" value="TreeGrafter"/>
</dbReference>
<dbReference type="GO" id="GO:0002098">
    <property type="term" value="P:tRNA wobble uridine modification"/>
    <property type="evidence" value="ECO:0007669"/>
    <property type="project" value="TreeGrafter"/>
</dbReference>
<dbReference type="FunFam" id="3.50.50.60:FF:000035">
    <property type="entry name" value="Methylenetetrahydrofolate--tRNA-(uracil-5-)-methyltransferase TrmFO"/>
    <property type="match status" value="1"/>
</dbReference>
<dbReference type="FunFam" id="3.50.50.60:FF:000040">
    <property type="entry name" value="Methylenetetrahydrofolate--tRNA-(uracil-5-)-methyltransferase TrmFO"/>
    <property type="match status" value="1"/>
</dbReference>
<dbReference type="Gene3D" id="3.50.50.60">
    <property type="entry name" value="FAD/NAD(P)-binding domain"/>
    <property type="match status" value="2"/>
</dbReference>
<dbReference type="HAMAP" id="MF_01037">
    <property type="entry name" value="TrmFO"/>
    <property type="match status" value="1"/>
</dbReference>
<dbReference type="InterPro" id="IPR036188">
    <property type="entry name" value="FAD/NAD-bd_sf"/>
</dbReference>
<dbReference type="InterPro" id="IPR002218">
    <property type="entry name" value="MnmG-rel"/>
</dbReference>
<dbReference type="InterPro" id="IPR020595">
    <property type="entry name" value="MnmG-rel_CS"/>
</dbReference>
<dbReference type="InterPro" id="IPR040131">
    <property type="entry name" value="MnmG_N"/>
</dbReference>
<dbReference type="InterPro" id="IPR004417">
    <property type="entry name" value="TrmFO"/>
</dbReference>
<dbReference type="NCBIfam" id="TIGR00137">
    <property type="entry name" value="gid_trmFO"/>
    <property type="match status" value="1"/>
</dbReference>
<dbReference type="NCBIfam" id="NF003739">
    <property type="entry name" value="PRK05335.1"/>
    <property type="match status" value="1"/>
</dbReference>
<dbReference type="PANTHER" id="PTHR11806">
    <property type="entry name" value="GLUCOSE INHIBITED DIVISION PROTEIN A"/>
    <property type="match status" value="1"/>
</dbReference>
<dbReference type="PANTHER" id="PTHR11806:SF2">
    <property type="entry name" value="METHYLENETETRAHYDROFOLATE--TRNA-(URACIL-5-)-METHYLTRANSFERASE TRMFO"/>
    <property type="match status" value="1"/>
</dbReference>
<dbReference type="Pfam" id="PF01134">
    <property type="entry name" value="GIDA"/>
    <property type="match status" value="1"/>
</dbReference>
<dbReference type="SUPFAM" id="SSF51905">
    <property type="entry name" value="FAD/NAD(P)-binding domain"/>
    <property type="match status" value="1"/>
</dbReference>
<dbReference type="PROSITE" id="PS01281">
    <property type="entry name" value="GIDA_2"/>
    <property type="match status" value="1"/>
</dbReference>
<organism>
    <name type="scientific">Lactococcus lactis subsp. lactis (strain IL1403)</name>
    <name type="common">Streptococcus lactis</name>
    <dbReference type="NCBI Taxonomy" id="272623"/>
    <lineage>
        <taxon>Bacteria</taxon>
        <taxon>Bacillati</taxon>
        <taxon>Bacillota</taxon>
        <taxon>Bacilli</taxon>
        <taxon>Lactobacillales</taxon>
        <taxon>Streptococcaceae</taxon>
        <taxon>Lactococcus</taxon>
    </lineage>
</organism>
<keyword id="KW-0963">Cytoplasm</keyword>
<keyword id="KW-0274">FAD</keyword>
<keyword id="KW-0285">Flavoprotein</keyword>
<keyword id="KW-0489">Methyltransferase</keyword>
<keyword id="KW-0520">NAD</keyword>
<keyword id="KW-0521">NADP</keyword>
<keyword id="KW-1185">Reference proteome</keyword>
<keyword id="KW-0808">Transferase</keyword>
<keyword id="KW-0819">tRNA processing</keyword>
<feature type="chain" id="PRO_0000117249" description="Methylenetetrahydrofolate--tRNA-(uracil-5-)-methyltransferase TrmFO">
    <location>
        <begin position="1"/>
        <end position="447"/>
    </location>
</feature>
<feature type="binding site" evidence="1">
    <location>
        <begin position="10"/>
        <end position="15"/>
    </location>
    <ligand>
        <name>FAD</name>
        <dbReference type="ChEBI" id="CHEBI:57692"/>
    </ligand>
</feature>
<gene>
    <name evidence="1" type="primary">trmFO</name>
    <name type="synonym">gid</name>
    <name type="synonym">gidC</name>
    <name type="ordered locus">LL1231</name>
    <name type="ORF">L56416</name>
</gene>
<protein>
    <recommendedName>
        <fullName evidence="1">Methylenetetrahydrofolate--tRNA-(uracil-5-)-methyltransferase TrmFO</fullName>
        <ecNumber evidence="1">2.1.1.74</ecNumber>
    </recommendedName>
    <alternativeName>
        <fullName evidence="1">Folate-dependent tRNA (uracil-5-)-methyltransferase</fullName>
    </alternativeName>
    <alternativeName>
        <fullName evidence="1">Folate-dependent tRNA(M-5-U54)-methyltransferase</fullName>
    </alternativeName>
</protein>
<sequence length="447" mass="49992">MKKTHINVIGAGLAGSEAAYQIAKRGIPVKLYEMRGVKQTPQHKTDKFAELVCSNSLRGAAITNAVGLLKEEMRRLDSVIIKAAEVTQVPAGGALAVDREGFSDFVTREVSNHPLVEVIREEITDLPEDEITIIATGPLTSDKLAEKIHEFNGADGFYFYDAAAPIIDANSINFDKVYKKSRYDKGEADYINCPMTKEEFQAFQEALISAEEAPLNSFEDLKVFEGCMPIEEMAKRGYKTMLFGPMKPVGLEYPEDYKGPRDGDFKTPYAVVQLRQDNASASLYNIVGFQTHLKWGEQKRVFQMIPGLENAEFVRYGVMHRNSYMDSPNLLKQTFQSRKQENLFFAGQMTGVEGYVESAASGLVAGINAVKLFNDEEVVIFPKTTAIGSLPYYITHTDSKHFQPMNVTFGIVEELEGPRIRDKKERYTKVAERALNSLTDIISKDNL</sequence>